<keyword id="KW-1185">Reference proteome</keyword>
<dbReference type="EMBL" id="AAFI02000035">
    <property type="protein sequence ID" value="EAL67379.1"/>
    <property type="molecule type" value="Genomic_DNA"/>
</dbReference>
<dbReference type="RefSeq" id="XP_641362.1">
    <property type="nucleotide sequence ID" value="XM_636270.1"/>
</dbReference>
<dbReference type="PaxDb" id="44689-DDB0305125"/>
<dbReference type="EnsemblProtists" id="EAL67379">
    <property type="protein sequence ID" value="EAL67379"/>
    <property type="gene ID" value="DDB_G0280305"/>
</dbReference>
<dbReference type="GeneID" id="8622496"/>
<dbReference type="KEGG" id="ddi:DDB_G0280305"/>
<dbReference type="dictyBase" id="DDB_G0280305"/>
<dbReference type="VEuPathDB" id="AmoebaDB:DDB_G0280305"/>
<dbReference type="HOGENOM" id="CLU_3128238_0_0_1"/>
<dbReference type="InParanoid" id="Q54VJ3"/>
<dbReference type="PRO" id="PR:Q54VJ3"/>
<dbReference type="Proteomes" id="UP000002195">
    <property type="component" value="Chromosome 3"/>
</dbReference>
<proteinExistence type="predicted"/>
<gene>
    <name type="ORF">DDB_G0280305</name>
</gene>
<sequence length="50" mass="5840">MAYGTEYENDAMIEIKCPFKEATLLMKVRKSNSNLDILIRTKNIKKFSNK</sequence>
<organism>
    <name type="scientific">Dictyostelium discoideum</name>
    <name type="common">Social amoeba</name>
    <dbReference type="NCBI Taxonomy" id="44689"/>
    <lineage>
        <taxon>Eukaryota</taxon>
        <taxon>Amoebozoa</taxon>
        <taxon>Evosea</taxon>
        <taxon>Eumycetozoa</taxon>
        <taxon>Dictyostelia</taxon>
        <taxon>Dictyosteliales</taxon>
        <taxon>Dictyosteliaceae</taxon>
        <taxon>Dictyostelium</taxon>
    </lineage>
</organism>
<feature type="chain" id="PRO_0000352470" description="Putative uncharacterized protein DDB_G0280305">
    <location>
        <begin position="1"/>
        <end position="50"/>
    </location>
</feature>
<reference key="1">
    <citation type="journal article" date="2005" name="Nature">
        <title>The genome of the social amoeba Dictyostelium discoideum.</title>
        <authorList>
            <person name="Eichinger L."/>
            <person name="Pachebat J.A."/>
            <person name="Gloeckner G."/>
            <person name="Rajandream M.A."/>
            <person name="Sucgang R."/>
            <person name="Berriman M."/>
            <person name="Song J."/>
            <person name="Olsen R."/>
            <person name="Szafranski K."/>
            <person name="Xu Q."/>
            <person name="Tunggal B."/>
            <person name="Kummerfeld S."/>
            <person name="Madera M."/>
            <person name="Konfortov B.A."/>
            <person name="Rivero F."/>
            <person name="Bankier A.T."/>
            <person name="Lehmann R."/>
            <person name="Hamlin N."/>
            <person name="Davies R."/>
            <person name="Gaudet P."/>
            <person name="Fey P."/>
            <person name="Pilcher K."/>
            <person name="Chen G."/>
            <person name="Saunders D."/>
            <person name="Sodergren E.J."/>
            <person name="Davis P."/>
            <person name="Kerhornou A."/>
            <person name="Nie X."/>
            <person name="Hall N."/>
            <person name="Anjard C."/>
            <person name="Hemphill L."/>
            <person name="Bason N."/>
            <person name="Farbrother P."/>
            <person name="Desany B."/>
            <person name="Just E."/>
            <person name="Morio T."/>
            <person name="Rost R."/>
            <person name="Churcher C.M."/>
            <person name="Cooper J."/>
            <person name="Haydock S."/>
            <person name="van Driessche N."/>
            <person name="Cronin A."/>
            <person name="Goodhead I."/>
            <person name="Muzny D.M."/>
            <person name="Mourier T."/>
            <person name="Pain A."/>
            <person name="Lu M."/>
            <person name="Harper D."/>
            <person name="Lindsay R."/>
            <person name="Hauser H."/>
            <person name="James K.D."/>
            <person name="Quiles M."/>
            <person name="Madan Babu M."/>
            <person name="Saito T."/>
            <person name="Buchrieser C."/>
            <person name="Wardroper A."/>
            <person name="Felder M."/>
            <person name="Thangavelu M."/>
            <person name="Johnson D."/>
            <person name="Knights A."/>
            <person name="Loulseged H."/>
            <person name="Mungall K.L."/>
            <person name="Oliver K."/>
            <person name="Price C."/>
            <person name="Quail M.A."/>
            <person name="Urushihara H."/>
            <person name="Hernandez J."/>
            <person name="Rabbinowitsch E."/>
            <person name="Steffen D."/>
            <person name="Sanders M."/>
            <person name="Ma J."/>
            <person name="Kohara Y."/>
            <person name="Sharp S."/>
            <person name="Simmonds M.N."/>
            <person name="Spiegler S."/>
            <person name="Tivey A."/>
            <person name="Sugano S."/>
            <person name="White B."/>
            <person name="Walker D."/>
            <person name="Woodward J.R."/>
            <person name="Winckler T."/>
            <person name="Tanaka Y."/>
            <person name="Shaulsky G."/>
            <person name="Schleicher M."/>
            <person name="Weinstock G.M."/>
            <person name="Rosenthal A."/>
            <person name="Cox E.C."/>
            <person name="Chisholm R.L."/>
            <person name="Gibbs R.A."/>
            <person name="Loomis W.F."/>
            <person name="Platzer M."/>
            <person name="Kay R.R."/>
            <person name="Williams J.G."/>
            <person name="Dear P.H."/>
            <person name="Noegel A.A."/>
            <person name="Barrell B.G."/>
            <person name="Kuspa A."/>
        </authorList>
    </citation>
    <scope>NUCLEOTIDE SEQUENCE [LARGE SCALE GENOMIC DNA]</scope>
    <source>
        <strain>AX4</strain>
    </source>
</reference>
<name>Y6501_DICDI</name>
<accession>Q54VJ3</accession>
<protein>
    <recommendedName>
        <fullName>Putative uncharacterized protein DDB_G0280305</fullName>
    </recommendedName>
</protein>